<name>PLST2_ARATH</name>
<comment type="function">
    <text evidence="1">May be involved in the efflux of glucose towards the cytosol.</text>
</comment>
<comment type="subcellular location">
    <subcellularLocation>
        <location evidence="1">Plastid</location>
        <location evidence="1">Chloroplast membrane</location>
        <topology evidence="1">Multi-pass membrane protein</topology>
    </subcellularLocation>
</comment>
<comment type="alternative products">
    <event type="alternative splicing"/>
    <isoform>
        <id>Q9FYG3-1</id>
        <name>1</name>
        <sequence type="displayed"/>
    </isoform>
    <text>A number of isoforms are produced. According to EST sequences.</text>
</comment>
<comment type="similarity">
    <text evidence="4">Belongs to the major facilitator superfamily. Sugar transporter (TC 2.A.1.1) family.</text>
</comment>
<proteinExistence type="evidence at transcript level"/>
<protein>
    <recommendedName>
        <fullName>Probable plastidic glucose transporter 2</fullName>
    </recommendedName>
</protein>
<dbReference type="EMBL" id="AC002130">
    <property type="protein sequence ID" value="AAG00251.1"/>
    <property type="molecule type" value="Genomic_DNA"/>
</dbReference>
<dbReference type="EMBL" id="CP002684">
    <property type="protein sequence ID" value="AEE34625.1"/>
    <property type="molecule type" value="Genomic_DNA"/>
</dbReference>
<dbReference type="EMBL" id="CP002684">
    <property type="protein sequence ID" value="ANM58312.1"/>
    <property type="molecule type" value="Genomic_DNA"/>
</dbReference>
<dbReference type="EMBL" id="AK226899">
    <property type="protein sequence ID" value="BAE98976.1"/>
    <property type="molecule type" value="mRNA"/>
</dbReference>
<dbReference type="PIR" id="F96696">
    <property type="entry name" value="F96696"/>
</dbReference>
<dbReference type="RefSeq" id="NP_001320757.1">
    <molecule id="Q9FYG3-1"/>
    <property type="nucleotide sequence ID" value="NM_001334287.1"/>
</dbReference>
<dbReference type="RefSeq" id="NP_176898.1">
    <molecule id="Q9FYG3-1"/>
    <property type="nucleotide sequence ID" value="NM_105398.4"/>
</dbReference>
<dbReference type="SMR" id="Q9FYG3"/>
<dbReference type="FunCoup" id="Q9FYG3">
    <property type="interactions" value="176"/>
</dbReference>
<dbReference type="STRING" id="3702.Q9FYG3"/>
<dbReference type="TCDB" id="2.A.1.1.158">
    <property type="family name" value="the major facilitator superfamily (mfs)"/>
</dbReference>
<dbReference type="PaxDb" id="3702-AT1G67300.2"/>
<dbReference type="ProteomicsDB" id="235070">
    <molecule id="Q9FYG3-1"/>
</dbReference>
<dbReference type="EnsemblPlants" id="AT1G67300.1">
    <molecule id="Q9FYG3-1"/>
    <property type="protein sequence ID" value="AT1G67300.1"/>
    <property type="gene ID" value="AT1G67300"/>
</dbReference>
<dbReference type="EnsemblPlants" id="AT1G67300.3">
    <molecule id="Q9FYG3-1"/>
    <property type="protein sequence ID" value="AT1G67300.3"/>
    <property type="gene ID" value="AT1G67300"/>
</dbReference>
<dbReference type="GeneID" id="843050"/>
<dbReference type="Gramene" id="AT1G67300.1">
    <molecule id="Q9FYG3-1"/>
    <property type="protein sequence ID" value="AT1G67300.1"/>
    <property type="gene ID" value="AT1G67300"/>
</dbReference>
<dbReference type="Gramene" id="AT1G67300.3">
    <molecule id="Q9FYG3-1"/>
    <property type="protein sequence ID" value="AT1G67300.3"/>
    <property type="gene ID" value="AT1G67300"/>
</dbReference>
<dbReference type="KEGG" id="ath:AT1G67300"/>
<dbReference type="Araport" id="AT1G67300"/>
<dbReference type="TAIR" id="AT1G67300"/>
<dbReference type="eggNOG" id="KOG0254">
    <property type="taxonomic scope" value="Eukaryota"/>
</dbReference>
<dbReference type="HOGENOM" id="CLU_001265_30_5_1"/>
<dbReference type="InParanoid" id="Q9FYG3"/>
<dbReference type="OMA" id="EQSYLCY"/>
<dbReference type="OrthoDB" id="6612291at2759"/>
<dbReference type="PhylomeDB" id="Q9FYG3"/>
<dbReference type="PRO" id="PR:Q9FYG3"/>
<dbReference type="Proteomes" id="UP000006548">
    <property type="component" value="Chromosome 1"/>
</dbReference>
<dbReference type="ExpressionAtlas" id="Q9FYG3">
    <property type="expression patterns" value="baseline and differential"/>
</dbReference>
<dbReference type="GO" id="GO:0031969">
    <property type="term" value="C:chloroplast membrane"/>
    <property type="evidence" value="ECO:0007669"/>
    <property type="project" value="UniProtKB-SubCell"/>
</dbReference>
<dbReference type="GO" id="GO:0022857">
    <property type="term" value="F:transmembrane transporter activity"/>
    <property type="evidence" value="ECO:0007669"/>
    <property type="project" value="InterPro"/>
</dbReference>
<dbReference type="CDD" id="cd17315">
    <property type="entry name" value="MFS_GLUT_like"/>
    <property type="match status" value="1"/>
</dbReference>
<dbReference type="Gene3D" id="1.20.1250.20">
    <property type="entry name" value="MFS general substrate transporter like domains"/>
    <property type="match status" value="1"/>
</dbReference>
<dbReference type="InterPro" id="IPR045263">
    <property type="entry name" value="GLUT"/>
</dbReference>
<dbReference type="InterPro" id="IPR020846">
    <property type="entry name" value="MFS_dom"/>
</dbReference>
<dbReference type="InterPro" id="IPR005828">
    <property type="entry name" value="MFS_sugar_transport-like"/>
</dbReference>
<dbReference type="InterPro" id="IPR036259">
    <property type="entry name" value="MFS_trans_sf"/>
</dbReference>
<dbReference type="InterPro" id="IPR003663">
    <property type="entry name" value="Sugar/inositol_transpt"/>
</dbReference>
<dbReference type="InterPro" id="IPR005829">
    <property type="entry name" value="Sugar_transporter_CS"/>
</dbReference>
<dbReference type="NCBIfam" id="TIGR00879">
    <property type="entry name" value="SP"/>
    <property type="match status" value="1"/>
</dbReference>
<dbReference type="PANTHER" id="PTHR23503:SF8">
    <property type="entry name" value="FACILITATED GLUCOSE TRANSPORTER PROTEIN 1"/>
    <property type="match status" value="1"/>
</dbReference>
<dbReference type="PANTHER" id="PTHR23503">
    <property type="entry name" value="SOLUTE CARRIER FAMILY 2"/>
    <property type="match status" value="1"/>
</dbReference>
<dbReference type="Pfam" id="PF00083">
    <property type="entry name" value="Sugar_tr"/>
    <property type="match status" value="1"/>
</dbReference>
<dbReference type="PRINTS" id="PR00171">
    <property type="entry name" value="SUGRTRNSPORT"/>
</dbReference>
<dbReference type="SUPFAM" id="SSF103473">
    <property type="entry name" value="MFS general substrate transporter"/>
    <property type="match status" value="1"/>
</dbReference>
<dbReference type="PROSITE" id="PS50850">
    <property type="entry name" value="MFS"/>
    <property type="match status" value="1"/>
</dbReference>
<dbReference type="PROSITE" id="PS00216">
    <property type="entry name" value="SUGAR_TRANSPORT_1"/>
    <property type="match status" value="2"/>
</dbReference>
<reference key="1">
    <citation type="journal article" date="2000" name="Nature">
        <title>Sequence and analysis of chromosome 1 of the plant Arabidopsis thaliana.</title>
        <authorList>
            <person name="Theologis A."/>
            <person name="Ecker J.R."/>
            <person name="Palm C.J."/>
            <person name="Federspiel N.A."/>
            <person name="Kaul S."/>
            <person name="White O."/>
            <person name="Alonso J."/>
            <person name="Altafi H."/>
            <person name="Araujo R."/>
            <person name="Bowman C.L."/>
            <person name="Brooks S.Y."/>
            <person name="Buehler E."/>
            <person name="Chan A."/>
            <person name="Chao Q."/>
            <person name="Chen H."/>
            <person name="Cheuk R.F."/>
            <person name="Chin C.W."/>
            <person name="Chung M.K."/>
            <person name="Conn L."/>
            <person name="Conway A.B."/>
            <person name="Conway A.R."/>
            <person name="Creasy T.H."/>
            <person name="Dewar K."/>
            <person name="Dunn P."/>
            <person name="Etgu P."/>
            <person name="Feldblyum T.V."/>
            <person name="Feng J.-D."/>
            <person name="Fong B."/>
            <person name="Fujii C.Y."/>
            <person name="Gill J.E."/>
            <person name="Goldsmith A.D."/>
            <person name="Haas B."/>
            <person name="Hansen N.F."/>
            <person name="Hughes B."/>
            <person name="Huizar L."/>
            <person name="Hunter J.L."/>
            <person name="Jenkins J."/>
            <person name="Johnson-Hopson C."/>
            <person name="Khan S."/>
            <person name="Khaykin E."/>
            <person name="Kim C.J."/>
            <person name="Koo H.L."/>
            <person name="Kremenetskaia I."/>
            <person name="Kurtz D.B."/>
            <person name="Kwan A."/>
            <person name="Lam B."/>
            <person name="Langin-Hooper S."/>
            <person name="Lee A."/>
            <person name="Lee J.M."/>
            <person name="Lenz C.A."/>
            <person name="Li J.H."/>
            <person name="Li Y.-P."/>
            <person name="Lin X."/>
            <person name="Liu S.X."/>
            <person name="Liu Z.A."/>
            <person name="Luros J.S."/>
            <person name="Maiti R."/>
            <person name="Marziali A."/>
            <person name="Militscher J."/>
            <person name="Miranda M."/>
            <person name="Nguyen M."/>
            <person name="Nierman W.C."/>
            <person name="Osborne B.I."/>
            <person name="Pai G."/>
            <person name="Peterson J."/>
            <person name="Pham P.K."/>
            <person name="Rizzo M."/>
            <person name="Rooney T."/>
            <person name="Rowley D."/>
            <person name="Sakano H."/>
            <person name="Salzberg S.L."/>
            <person name="Schwartz J.R."/>
            <person name="Shinn P."/>
            <person name="Southwick A.M."/>
            <person name="Sun H."/>
            <person name="Tallon L.J."/>
            <person name="Tambunga G."/>
            <person name="Toriumi M.J."/>
            <person name="Town C.D."/>
            <person name="Utterback T."/>
            <person name="Van Aken S."/>
            <person name="Vaysberg M."/>
            <person name="Vysotskaia V.S."/>
            <person name="Walker M."/>
            <person name="Wu D."/>
            <person name="Yu G."/>
            <person name="Fraser C.M."/>
            <person name="Venter J.C."/>
            <person name="Davis R.W."/>
        </authorList>
    </citation>
    <scope>NUCLEOTIDE SEQUENCE [LARGE SCALE GENOMIC DNA]</scope>
    <source>
        <strain>cv. Columbia</strain>
    </source>
</reference>
<reference key="2">
    <citation type="journal article" date="2017" name="Plant J.">
        <title>Araport11: a complete reannotation of the Arabidopsis thaliana reference genome.</title>
        <authorList>
            <person name="Cheng C.Y."/>
            <person name="Krishnakumar V."/>
            <person name="Chan A.P."/>
            <person name="Thibaud-Nissen F."/>
            <person name="Schobel S."/>
            <person name="Town C.D."/>
        </authorList>
    </citation>
    <scope>GENOME REANNOTATION</scope>
    <source>
        <strain>cv. Columbia</strain>
    </source>
</reference>
<reference key="3">
    <citation type="submission" date="2006-07" db="EMBL/GenBank/DDBJ databases">
        <title>Large-scale analysis of RIKEN Arabidopsis full-length (RAFL) cDNAs.</title>
        <authorList>
            <person name="Totoki Y."/>
            <person name="Seki M."/>
            <person name="Ishida J."/>
            <person name="Nakajima M."/>
            <person name="Enju A."/>
            <person name="Kamiya A."/>
            <person name="Narusaka M."/>
            <person name="Shin-i T."/>
            <person name="Nakagawa M."/>
            <person name="Sakamoto N."/>
            <person name="Oishi K."/>
            <person name="Kohara Y."/>
            <person name="Kobayashi M."/>
            <person name="Toyoda A."/>
            <person name="Sakaki Y."/>
            <person name="Sakurai T."/>
            <person name="Iida K."/>
            <person name="Akiyama K."/>
            <person name="Satou M."/>
            <person name="Toyoda T."/>
            <person name="Konagaya A."/>
            <person name="Carninci P."/>
            <person name="Kawai J."/>
            <person name="Hayashizaki Y."/>
            <person name="Shinozaki K."/>
        </authorList>
    </citation>
    <scope>NUCLEOTIDE SEQUENCE [LARGE SCALE MRNA]</scope>
    <source>
        <strain>cv. Columbia</strain>
    </source>
</reference>
<reference key="4">
    <citation type="journal article" date="2006" name="BMC Evol. Biol.">
        <title>The monosaccharide transporter gene family in land plants is ancient and shows differential subfamily expression and expansion across lineages.</title>
        <authorList>
            <person name="Johnson D.A."/>
            <person name="Hill J.P."/>
            <person name="Thomas M.A."/>
        </authorList>
    </citation>
    <scope>GENE FAMILY</scope>
</reference>
<feature type="chain" id="PRO_0000259886" description="Probable plastidic glucose transporter 2">
    <location>
        <begin position="1"/>
        <end position="493"/>
    </location>
</feature>
<feature type="transmembrane region" description="Helical; Name=1" evidence="2">
    <location>
        <begin position="52"/>
        <end position="72"/>
    </location>
</feature>
<feature type="transmembrane region" description="Helical; Name=2" evidence="2">
    <location>
        <begin position="94"/>
        <end position="114"/>
    </location>
</feature>
<feature type="transmembrane region" description="Helical; Name=3" evidence="2">
    <location>
        <begin position="128"/>
        <end position="148"/>
    </location>
</feature>
<feature type="transmembrane region" description="Helical; Name=4" evidence="2">
    <location>
        <begin position="151"/>
        <end position="171"/>
    </location>
</feature>
<feature type="transmembrane region" description="Helical; Name=5" evidence="2">
    <location>
        <begin position="182"/>
        <end position="202"/>
    </location>
</feature>
<feature type="transmembrane region" description="Helical; Name=6" evidence="2">
    <location>
        <begin position="211"/>
        <end position="231"/>
    </location>
</feature>
<feature type="transmembrane region" description="Helical; Name=7" evidence="2">
    <location>
        <begin position="293"/>
        <end position="313"/>
    </location>
</feature>
<feature type="transmembrane region" description="Helical; Name=8" evidence="2">
    <location>
        <begin position="329"/>
        <end position="349"/>
    </location>
</feature>
<feature type="transmembrane region" description="Helical; Name=9" evidence="2">
    <location>
        <begin position="356"/>
        <end position="376"/>
    </location>
</feature>
<feature type="transmembrane region" description="Helical; Name=10" evidence="2">
    <location>
        <begin position="392"/>
        <end position="412"/>
    </location>
</feature>
<feature type="transmembrane region" description="Helical; Name=11" evidence="2">
    <location>
        <begin position="424"/>
        <end position="444"/>
    </location>
</feature>
<feature type="transmembrane region" description="Helical; Name=12" evidence="2">
    <location>
        <begin position="450"/>
        <end position="470"/>
    </location>
</feature>
<feature type="region of interest" description="Disordered" evidence="3">
    <location>
        <begin position="1"/>
        <end position="24"/>
    </location>
</feature>
<feature type="compositionally biased region" description="Polar residues" evidence="3">
    <location>
        <begin position="1"/>
        <end position="14"/>
    </location>
</feature>
<sequence length="493" mass="53127">MLGLQRETSSMYKRTSSRDYSPMIDVEDSSGLLENDVDNEMETTNPSWKCSLPHVLVATISSFLFGYHLGVVNEPLESISSDLGFSGDTLAEGLVVSVCLGGAFLGSLFSGGVADGFGRRRAFQICALPMILGAFVSGVSNSLAVMLLGRFLVGTGMGLGPPVAALYVTEVSPAFVRGTYGSFIQIATCLGLMAALFIGIPVHNITGWWRVCFWLSTIPAALLALGMFLCAESPQWLFKQGKIAEAEAEFERLLGGSHVKTAMAELYKLDLDKTDEPDVVSLSELLYGRHSRVVFIGSTLFALQQLSGINAVFYFSSTVFKSAGVPSDLGNIFVGVSNLLGSVIAMVLMDKVGRKLLLLWSFIGMAAAMALQVGATSSYLPHFSALCLSVGGTLVFVLTFALGAGPVPGLLLPEIFPSRIRAKAMAFCMSVHWVINFFVGLLFLRLLEKLGPRLLYSMFSTFCLMAVMFVKRNVIETKGKTLQEIEISLLAKP</sequence>
<accession>Q9FYG3</accession>
<gene>
    <name type="ordered locus">At1g67300</name>
    <name type="ORF">F1N21.12</name>
</gene>
<organism>
    <name type="scientific">Arabidopsis thaliana</name>
    <name type="common">Mouse-ear cress</name>
    <dbReference type="NCBI Taxonomy" id="3702"/>
    <lineage>
        <taxon>Eukaryota</taxon>
        <taxon>Viridiplantae</taxon>
        <taxon>Streptophyta</taxon>
        <taxon>Embryophyta</taxon>
        <taxon>Tracheophyta</taxon>
        <taxon>Spermatophyta</taxon>
        <taxon>Magnoliopsida</taxon>
        <taxon>eudicotyledons</taxon>
        <taxon>Gunneridae</taxon>
        <taxon>Pentapetalae</taxon>
        <taxon>rosids</taxon>
        <taxon>malvids</taxon>
        <taxon>Brassicales</taxon>
        <taxon>Brassicaceae</taxon>
        <taxon>Camelineae</taxon>
        <taxon>Arabidopsis</taxon>
    </lineage>
</organism>
<evidence type="ECO:0000250" key="1"/>
<evidence type="ECO:0000255" key="2"/>
<evidence type="ECO:0000256" key="3">
    <source>
        <dbReference type="SAM" id="MobiDB-lite"/>
    </source>
</evidence>
<evidence type="ECO:0000305" key="4"/>
<keyword id="KW-0025">Alternative splicing</keyword>
<keyword id="KW-0150">Chloroplast</keyword>
<keyword id="KW-0472">Membrane</keyword>
<keyword id="KW-0934">Plastid</keyword>
<keyword id="KW-1185">Reference proteome</keyword>
<keyword id="KW-0762">Sugar transport</keyword>
<keyword id="KW-0812">Transmembrane</keyword>
<keyword id="KW-1133">Transmembrane helix</keyword>
<keyword id="KW-0813">Transport</keyword>